<dbReference type="EC" id="3.5.1.96" evidence="1"/>
<dbReference type="EMBL" id="AE015451">
    <property type="protein sequence ID" value="AAN70050.1"/>
    <property type="molecule type" value="Genomic_DNA"/>
</dbReference>
<dbReference type="RefSeq" id="NP_746586.1">
    <property type="nucleotide sequence ID" value="NC_002947.4"/>
</dbReference>
<dbReference type="RefSeq" id="WP_010955173.1">
    <property type="nucleotide sequence ID" value="NZ_CP169744.1"/>
</dbReference>
<dbReference type="SMR" id="Q88EI7"/>
<dbReference type="STRING" id="160488.PP_4475"/>
<dbReference type="PaxDb" id="160488-PP_4475"/>
<dbReference type="GeneID" id="83678869"/>
<dbReference type="KEGG" id="ppu:PP_4475"/>
<dbReference type="PATRIC" id="fig|160488.4.peg.4761"/>
<dbReference type="eggNOG" id="COG2988">
    <property type="taxonomic scope" value="Bacteria"/>
</dbReference>
<dbReference type="HOGENOM" id="CLU_071608_0_0_6"/>
<dbReference type="OrthoDB" id="5290473at2"/>
<dbReference type="PhylomeDB" id="Q88EI7"/>
<dbReference type="BioCyc" id="PPUT160488:G1G01-4776-MONOMER"/>
<dbReference type="UniPathway" id="UPA00185">
    <property type="reaction ID" value="UER00283"/>
</dbReference>
<dbReference type="Proteomes" id="UP000000556">
    <property type="component" value="Chromosome"/>
</dbReference>
<dbReference type="GO" id="GO:0016788">
    <property type="term" value="F:hydrolase activity, acting on ester bonds"/>
    <property type="evidence" value="ECO:0007669"/>
    <property type="project" value="UniProtKB-UniRule"/>
</dbReference>
<dbReference type="GO" id="GO:0009017">
    <property type="term" value="F:succinylglutamate desuccinylase activity"/>
    <property type="evidence" value="ECO:0007669"/>
    <property type="project" value="UniProtKB-EC"/>
</dbReference>
<dbReference type="GO" id="GO:0008270">
    <property type="term" value="F:zinc ion binding"/>
    <property type="evidence" value="ECO:0007669"/>
    <property type="project" value="UniProtKB-UniRule"/>
</dbReference>
<dbReference type="GO" id="GO:0019544">
    <property type="term" value="P:arginine catabolic process to glutamate"/>
    <property type="evidence" value="ECO:0007669"/>
    <property type="project" value="UniProtKB-UniRule"/>
</dbReference>
<dbReference type="GO" id="GO:0019545">
    <property type="term" value="P:arginine catabolic process to succinate"/>
    <property type="evidence" value="ECO:0007669"/>
    <property type="project" value="UniProtKB-UniRule"/>
</dbReference>
<dbReference type="CDD" id="cd03855">
    <property type="entry name" value="M14_ASTE"/>
    <property type="match status" value="1"/>
</dbReference>
<dbReference type="Gene3D" id="3.40.630.10">
    <property type="entry name" value="Zn peptidases"/>
    <property type="match status" value="1"/>
</dbReference>
<dbReference type="HAMAP" id="MF_00767">
    <property type="entry name" value="Arg_catab_AstE"/>
    <property type="match status" value="1"/>
</dbReference>
<dbReference type="InterPro" id="IPR050178">
    <property type="entry name" value="AspA/AstE_fam"/>
</dbReference>
<dbReference type="InterPro" id="IPR055438">
    <property type="entry name" value="AstE_AspA_cat"/>
</dbReference>
<dbReference type="InterPro" id="IPR007036">
    <property type="entry name" value="Aste_AspA_hybrid_dom"/>
</dbReference>
<dbReference type="InterPro" id="IPR016681">
    <property type="entry name" value="SuccinylGlu_desuccinylase"/>
</dbReference>
<dbReference type="NCBIfam" id="TIGR03242">
    <property type="entry name" value="arg_catab_astE"/>
    <property type="match status" value="1"/>
</dbReference>
<dbReference type="NCBIfam" id="NF003706">
    <property type="entry name" value="PRK05324.1"/>
    <property type="match status" value="1"/>
</dbReference>
<dbReference type="PANTHER" id="PTHR15162">
    <property type="entry name" value="ASPARTOACYLASE"/>
    <property type="match status" value="1"/>
</dbReference>
<dbReference type="PANTHER" id="PTHR15162:SF7">
    <property type="entry name" value="SUCCINYLGLUTAMATE DESUCCINYLASE"/>
    <property type="match status" value="1"/>
</dbReference>
<dbReference type="Pfam" id="PF24827">
    <property type="entry name" value="AstE_AspA_cat"/>
    <property type="match status" value="1"/>
</dbReference>
<dbReference type="Pfam" id="PF04952">
    <property type="entry name" value="AstE_AspA_hybrid"/>
    <property type="match status" value="1"/>
</dbReference>
<dbReference type="PIRSF" id="PIRSF017020">
    <property type="entry name" value="AstE"/>
    <property type="match status" value="1"/>
</dbReference>
<dbReference type="SUPFAM" id="SSF53187">
    <property type="entry name" value="Zn-dependent exopeptidases"/>
    <property type="match status" value="1"/>
</dbReference>
<name>ASTE_PSEPK</name>
<gene>
    <name evidence="1" type="primary">astE</name>
    <name type="ordered locus">PP_4475</name>
</gene>
<evidence type="ECO:0000255" key="1">
    <source>
        <dbReference type="HAMAP-Rule" id="MF_00767"/>
    </source>
</evidence>
<reference key="1">
    <citation type="journal article" date="2002" name="Environ. Microbiol.">
        <title>Complete genome sequence and comparative analysis of the metabolically versatile Pseudomonas putida KT2440.</title>
        <authorList>
            <person name="Nelson K.E."/>
            <person name="Weinel C."/>
            <person name="Paulsen I.T."/>
            <person name="Dodson R.J."/>
            <person name="Hilbert H."/>
            <person name="Martins dos Santos V.A.P."/>
            <person name="Fouts D.E."/>
            <person name="Gill S.R."/>
            <person name="Pop M."/>
            <person name="Holmes M."/>
            <person name="Brinkac L.M."/>
            <person name="Beanan M.J."/>
            <person name="DeBoy R.T."/>
            <person name="Daugherty S.C."/>
            <person name="Kolonay J.F."/>
            <person name="Madupu R."/>
            <person name="Nelson W.C."/>
            <person name="White O."/>
            <person name="Peterson J.D."/>
            <person name="Khouri H.M."/>
            <person name="Hance I."/>
            <person name="Chris Lee P."/>
            <person name="Holtzapple E.K."/>
            <person name="Scanlan D."/>
            <person name="Tran K."/>
            <person name="Moazzez A."/>
            <person name="Utterback T.R."/>
            <person name="Rizzo M."/>
            <person name="Lee K."/>
            <person name="Kosack D."/>
            <person name="Moestl D."/>
            <person name="Wedler H."/>
            <person name="Lauber J."/>
            <person name="Stjepandic D."/>
            <person name="Hoheisel J."/>
            <person name="Straetz M."/>
            <person name="Heim S."/>
            <person name="Kiewitz C."/>
            <person name="Eisen J.A."/>
            <person name="Timmis K.N."/>
            <person name="Duesterhoeft A."/>
            <person name="Tuemmler B."/>
            <person name="Fraser C.M."/>
        </authorList>
    </citation>
    <scope>NUCLEOTIDE SEQUENCE [LARGE SCALE GENOMIC DNA]</scope>
    <source>
        <strain>ATCC 47054 / DSM 6125 / CFBP 8728 / NCIMB 11950 / KT2440</strain>
    </source>
</reference>
<protein>
    <recommendedName>
        <fullName evidence="1">Succinylglutamate desuccinylase</fullName>
        <ecNumber evidence="1">3.5.1.96</ecNumber>
    </recommendedName>
</protein>
<organism>
    <name type="scientific">Pseudomonas putida (strain ATCC 47054 / DSM 6125 / CFBP 8728 / NCIMB 11950 / KT2440)</name>
    <dbReference type="NCBI Taxonomy" id="160488"/>
    <lineage>
        <taxon>Bacteria</taxon>
        <taxon>Pseudomonadati</taxon>
        <taxon>Pseudomonadota</taxon>
        <taxon>Gammaproteobacteria</taxon>
        <taxon>Pseudomonadales</taxon>
        <taxon>Pseudomonadaceae</taxon>
        <taxon>Pseudomonas</taxon>
    </lineage>
</organism>
<comment type="function">
    <text evidence="1">Transforms N(2)-succinylglutamate into succinate and glutamate.</text>
</comment>
<comment type="catalytic activity">
    <reaction evidence="1">
        <text>N-succinyl-L-glutamate + H2O = L-glutamate + succinate</text>
        <dbReference type="Rhea" id="RHEA:15169"/>
        <dbReference type="ChEBI" id="CHEBI:15377"/>
        <dbReference type="ChEBI" id="CHEBI:29985"/>
        <dbReference type="ChEBI" id="CHEBI:30031"/>
        <dbReference type="ChEBI" id="CHEBI:58763"/>
        <dbReference type="EC" id="3.5.1.96"/>
    </reaction>
</comment>
<comment type="cofactor">
    <cofactor evidence="1">
        <name>Zn(2+)</name>
        <dbReference type="ChEBI" id="CHEBI:29105"/>
    </cofactor>
    <text evidence="1">Binds 1 zinc ion per subunit.</text>
</comment>
<comment type="pathway">
    <text evidence="1">Amino-acid degradation; L-arginine degradation via AST pathway; L-glutamate and succinate from L-arginine: step 5/5.</text>
</comment>
<comment type="similarity">
    <text evidence="1">Belongs to the AspA/AstE family. Succinylglutamate desuccinylase subfamily.</text>
</comment>
<accession>Q88EI7</accession>
<proteinExistence type="inferred from homology"/>
<feature type="chain" id="PRO_0000174644" description="Succinylglutamate desuccinylase">
    <location>
        <begin position="1"/>
        <end position="335"/>
    </location>
</feature>
<feature type="active site" evidence="1">
    <location>
        <position position="215"/>
    </location>
</feature>
<feature type="binding site" evidence="1">
    <location>
        <position position="59"/>
    </location>
    <ligand>
        <name>Zn(2+)</name>
        <dbReference type="ChEBI" id="CHEBI:29105"/>
    </ligand>
</feature>
<feature type="binding site" evidence="1">
    <location>
        <position position="62"/>
    </location>
    <ligand>
        <name>Zn(2+)</name>
        <dbReference type="ChEBI" id="CHEBI:29105"/>
    </ligand>
</feature>
<feature type="binding site" evidence="1">
    <location>
        <position position="151"/>
    </location>
    <ligand>
        <name>Zn(2+)</name>
        <dbReference type="ChEBI" id="CHEBI:29105"/>
    </ligand>
</feature>
<keyword id="KW-0056">Arginine metabolism</keyword>
<keyword id="KW-0378">Hydrolase</keyword>
<keyword id="KW-0479">Metal-binding</keyword>
<keyword id="KW-1185">Reference proteome</keyword>
<keyword id="KW-0862">Zinc</keyword>
<sequence length="335" mass="37581">MLALGKLLELTLTDHEPAEKTQVTPKGARLRWLGEGALEVRPAESDDCGLDLLLSAGIHGNETAPIELLERLLHGVANGKIRPRARVLFLFGNPAAIRKGERFIEQDINRLFNGRHELSSGFEALRAAELEQFARVFFSKPGRNRLHYDLHTAIRGSKIEQFALYPYKEGRKHSRRELARLAAAGMEAVLLQSKSSITFSAFTYEQLEAEAFTLELGKARPFGQNEQVNLDKLEERLIRIIEATEPEDESSLDGLQLFSVSREIIKHSDSFHLHLPADIENFSELSKGYLLAEDLAEMRWVVEEEGARIIFPNPKVKNGLRAGILIVPDSGQRLG</sequence>